<keyword id="KW-0937">Abscisic acid biosynthesis</keyword>
<keyword id="KW-0007">Acetylation</keyword>
<keyword id="KW-0963">Cytoplasm</keyword>
<keyword id="KW-0520">NAD</keyword>
<keyword id="KW-0560">Oxidoreductase</keyword>
<keyword id="KW-1185">Reference proteome</keyword>
<dbReference type="EC" id="1.1.1.288" evidence="3"/>
<dbReference type="EMBL" id="AC037424">
    <property type="protein sequence ID" value="AAG51536.1"/>
    <property type="molecule type" value="Genomic_DNA"/>
</dbReference>
<dbReference type="EMBL" id="CP002684">
    <property type="protein sequence ID" value="AEE32789.1"/>
    <property type="molecule type" value="Genomic_DNA"/>
</dbReference>
<dbReference type="EMBL" id="BT003412">
    <property type="protein sequence ID" value="AAO30075.1"/>
    <property type="molecule type" value="mRNA"/>
</dbReference>
<dbReference type="EMBL" id="AY099603">
    <property type="protein sequence ID" value="AAM20454.1"/>
    <property type="molecule type" value="mRNA"/>
</dbReference>
<dbReference type="EMBL" id="AY082344">
    <property type="protein sequence ID" value="AAL99237.1"/>
    <property type="molecule type" value="mRNA"/>
</dbReference>
<dbReference type="EMBL" id="AY082345">
    <property type="protein sequence ID" value="AAL99238.1"/>
    <property type="molecule type" value="Genomic_DNA"/>
</dbReference>
<dbReference type="PIR" id="F96563">
    <property type="entry name" value="F96563"/>
</dbReference>
<dbReference type="RefSeq" id="NP_175644.1">
    <property type="nucleotide sequence ID" value="NM_104113.5"/>
</dbReference>
<dbReference type="SMR" id="Q9C826"/>
<dbReference type="BioGRID" id="26890">
    <property type="interactions" value="4"/>
</dbReference>
<dbReference type="FunCoup" id="Q9C826">
    <property type="interactions" value="387"/>
</dbReference>
<dbReference type="IntAct" id="Q9C826">
    <property type="interactions" value="3"/>
</dbReference>
<dbReference type="STRING" id="3702.Q9C826"/>
<dbReference type="SwissLipids" id="SLP:000001503"/>
<dbReference type="iPTMnet" id="Q9C826"/>
<dbReference type="PaxDb" id="3702-AT1G52340.1"/>
<dbReference type="ProteomicsDB" id="244603"/>
<dbReference type="EnsemblPlants" id="AT1G52340.1">
    <property type="protein sequence ID" value="AT1G52340.1"/>
    <property type="gene ID" value="AT1G52340"/>
</dbReference>
<dbReference type="GeneID" id="841665"/>
<dbReference type="Gramene" id="AT1G52340.1">
    <property type="protein sequence ID" value="AT1G52340.1"/>
    <property type="gene ID" value="AT1G52340"/>
</dbReference>
<dbReference type="KEGG" id="ath:AT1G52340"/>
<dbReference type="Araport" id="AT1G52340"/>
<dbReference type="TAIR" id="AT1G52340">
    <property type="gene designation" value="ABA2"/>
</dbReference>
<dbReference type="eggNOG" id="KOG0725">
    <property type="taxonomic scope" value="Eukaryota"/>
</dbReference>
<dbReference type="HOGENOM" id="CLU_010194_1_0_1"/>
<dbReference type="InParanoid" id="Q9C826"/>
<dbReference type="OMA" id="YMTGTDF"/>
<dbReference type="OrthoDB" id="294295at2759"/>
<dbReference type="PhylomeDB" id="Q9C826"/>
<dbReference type="BioCyc" id="ARA:AT1G52340-MONOMER"/>
<dbReference type="BioCyc" id="MetaCyc:AT1G52340-MONOMER"/>
<dbReference type="BRENDA" id="1.1.1.288">
    <property type="organism ID" value="399"/>
</dbReference>
<dbReference type="SABIO-RK" id="Q9C826"/>
<dbReference type="PRO" id="PR:Q9C826"/>
<dbReference type="Proteomes" id="UP000006548">
    <property type="component" value="Chromosome 1"/>
</dbReference>
<dbReference type="ExpressionAtlas" id="Q9C826">
    <property type="expression patterns" value="baseline and differential"/>
</dbReference>
<dbReference type="GO" id="GO:0005829">
    <property type="term" value="C:cytosol"/>
    <property type="evidence" value="ECO:0000314"/>
    <property type="project" value="TAIR"/>
</dbReference>
<dbReference type="GO" id="GO:0005634">
    <property type="term" value="C:nucleus"/>
    <property type="evidence" value="ECO:0007005"/>
    <property type="project" value="TAIR"/>
</dbReference>
<dbReference type="GO" id="GO:0004022">
    <property type="term" value="F:alcohol dehydrogenase (NAD+) activity"/>
    <property type="evidence" value="ECO:0000314"/>
    <property type="project" value="TAIR"/>
</dbReference>
<dbReference type="GO" id="GO:0042802">
    <property type="term" value="F:identical protein binding"/>
    <property type="evidence" value="ECO:0000353"/>
    <property type="project" value="IntAct"/>
</dbReference>
<dbReference type="GO" id="GO:0010301">
    <property type="term" value="F:xanthoxin dehydrogenase (NAD+) activity"/>
    <property type="evidence" value="ECO:0000314"/>
    <property type="project" value="TAIR"/>
</dbReference>
<dbReference type="GO" id="GO:0009688">
    <property type="term" value="P:abscisic acid biosynthetic process"/>
    <property type="evidence" value="ECO:0000315"/>
    <property type="project" value="TAIR"/>
</dbReference>
<dbReference type="GO" id="GO:0006561">
    <property type="term" value="P:proline biosynthetic process"/>
    <property type="evidence" value="ECO:0000315"/>
    <property type="project" value="TAIR"/>
</dbReference>
<dbReference type="GO" id="GO:0010115">
    <property type="term" value="P:regulation of abscisic acid biosynthetic process"/>
    <property type="evidence" value="ECO:0000315"/>
    <property type="project" value="TAIR"/>
</dbReference>
<dbReference type="GO" id="GO:0009750">
    <property type="term" value="P:response to fructose"/>
    <property type="evidence" value="ECO:0000315"/>
    <property type="project" value="TAIR"/>
</dbReference>
<dbReference type="GO" id="GO:0009408">
    <property type="term" value="P:response to heat"/>
    <property type="evidence" value="ECO:0000315"/>
    <property type="project" value="TAIR"/>
</dbReference>
<dbReference type="GO" id="GO:0009414">
    <property type="term" value="P:response to water deprivation"/>
    <property type="evidence" value="ECO:0000315"/>
    <property type="project" value="TAIR"/>
</dbReference>
<dbReference type="GO" id="GO:0010182">
    <property type="term" value="P:sugar mediated signaling pathway"/>
    <property type="evidence" value="ECO:0000304"/>
    <property type="project" value="TAIR"/>
</dbReference>
<dbReference type="CDD" id="cd05326">
    <property type="entry name" value="secoisolariciresinol-DH_like_SDR_c"/>
    <property type="match status" value="1"/>
</dbReference>
<dbReference type="FunFam" id="3.40.50.720:FF:000084">
    <property type="entry name" value="Short-chain dehydrogenase reductase"/>
    <property type="match status" value="1"/>
</dbReference>
<dbReference type="Gene3D" id="3.40.50.720">
    <property type="entry name" value="NAD(P)-binding Rossmann-like Domain"/>
    <property type="match status" value="1"/>
</dbReference>
<dbReference type="InterPro" id="IPR045309">
    <property type="entry name" value="ABA2-like"/>
</dbReference>
<dbReference type="InterPro" id="IPR036291">
    <property type="entry name" value="NAD(P)-bd_dom_sf"/>
</dbReference>
<dbReference type="InterPro" id="IPR002347">
    <property type="entry name" value="SDR_fam"/>
</dbReference>
<dbReference type="NCBIfam" id="NF005559">
    <property type="entry name" value="PRK07231.1"/>
    <property type="match status" value="1"/>
</dbReference>
<dbReference type="PANTHER" id="PTHR42820">
    <property type="entry name" value="SHORT-CHAIN DEHYDROGENASE REDUCTASE"/>
    <property type="match status" value="1"/>
</dbReference>
<dbReference type="PANTHER" id="PTHR42820:SF1">
    <property type="entry name" value="SHORT-CHAIN DEHYDROGENASE_REDUCTASE FAMILY PROTEIN"/>
    <property type="match status" value="1"/>
</dbReference>
<dbReference type="Pfam" id="PF13561">
    <property type="entry name" value="adh_short_C2"/>
    <property type="match status" value="1"/>
</dbReference>
<dbReference type="PRINTS" id="PR00081">
    <property type="entry name" value="GDHRDH"/>
</dbReference>
<dbReference type="PRINTS" id="PR00080">
    <property type="entry name" value="SDRFAMILY"/>
</dbReference>
<dbReference type="SUPFAM" id="SSF51735">
    <property type="entry name" value="NAD(P)-binding Rossmann-fold domains"/>
    <property type="match status" value="1"/>
</dbReference>
<protein>
    <recommendedName>
        <fullName evidence="12">Xanthoxin dehydrogenase</fullName>
        <ecNumber evidence="3">1.1.1.288</ecNumber>
    </recommendedName>
    <alternativeName>
        <fullName evidence="10">Protein ABSCISIC ACID DEFICIENT 2</fullName>
    </alternativeName>
    <alternativeName>
        <fullName evidence="11">Protein GLUCOSE INSENSITIVE 1</fullName>
    </alternativeName>
    <alternativeName>
        <fullName evidence="7">Protein IMPAIRED SUCROSE INDUCTION 4</fullName>
    </alternativeName>
    <alternativeName>
        <fullName evidence="8">Protein SALOBRENO 3</fullName>
    </alternativeName>
    <alternativeName>
        <fullName evidence="8">Protein SALT RESISTANT 1</fullName>
    </alternativeName>
    <alternativeName>
        <fullName evidence="6">Protein SUGAR INSENSITIVE 4</fullName>
    </alternativeName>
    <alternativeName>
        <fullName evidence="8">Short-chain alcohol dehydrogenase ABA2</fullName>
    </alternativeName>
    <alternativeName>
        <fullName evidence="9">Short-chain dehydrogenase reductase 1</fullName>
        <shortName evidence="9">AtSDR1</shortName>
    </alternativeName>
    <alternativeName>
        <fullName evidence="8">Xanthoxin oxidase</fullName>
    </alternativeName>
</protein>
<organism>
    <name type="scientific">Arabidopsis thaliana</name>
    <name type="common">Mouse-ear cress</name>
    <dbReference type="NCBI Taxonomy" id="3702"/>
    <lineage>
        <taxon>Eukaryota</taxon>
        <taxon>Viridiplantae</taxon>
        <taxon>Streptophyta</taxon>
        <taxon>Embryophyta</taxon>
        <taxon>Tracheophyta</taxon>
        <taxon>Spermatophyta</taxon>
        <taxon>Magnoliopsida</taxon>
        <taxon>eudicotyledons</taxon>
        <taxon>Gunneridae</taxon>
        <taxon>Pentapetalae</taxon>
        <taxon>rosids</taxon>
        <taxon>malvids</taxon>
        <taxon>Brassicales</taxon>
        <taxon>Brassicaceae</taxon>
        <taxon>Camelineae</taxon>
        <taxon>Arabidopsis</taxon>
    </lineage>
</organism>
<accession>Q9C826</accession>
<proteinExistence type="evidence at protein level"/>
<comment type="function">
    <text evidence="1 3 4 5">Involved in the biosynthesis of abscisic acid (PubMed:10972885, PubMed:12172025, PubMed:12417697, PubMed:9159947). Catalyzes the conversion of xanthoxin to abscisic aldehyde (PubMed:12172025, PubMed:12417697, PubMed:9159947).</text>
</comment>
<comment type="catalytic activity">
    <reaction evidence="3">
        <text>2-cis,4-trans-xanthoxin + NAD(+) = 2-cis-(+)-abscisic aldehyde + NADH + H(+)</text>
        <dbReference type="Rhea" id="RHEA:12548"/>
        <dbReference type="ChEBI" id="CHEBI:15378"/>
        <dbReference type="ChEBI" id="CHEBI:31157"/>
        <dbReference type="ChEBI" id="CHEBI:32304"/>
        <dbReference type="ChEBI" id="CHEBI:57540"/>
        <dbReference type="ChEBI" id="CHEBI:57945"/>
        <dbReference type="EC" id="1.1.1.288"/>
    </reaction>
    <physiologicalReaction direction="left-to-right" evidence="3">
        <dbReference type="Rhea" id="RHEA:12549"/>
    </physiologicalReaction>
</comment>
<comment type="catalytic activity">
    <reaction evidence="3">
        <text>2-trans,4-trans-xanthoxin + NAD(+) = 2-trans-(+)-abscisic aldehyde + NADH + H(+)</text>
        <dbReference type="Rhea" id="RHEA:49312"/>
        <dbReference type="ChEBI" id="CHEBI:15378"/>
        <dbReference type="ChEBI" id="CHEBI:57540"/>
        <dbReference type="ChEBI" id="CHEBI:57945"/>
        <dbReference type="ChEBI" id="CHEBI:91126"/>
        <dbReference type="ChEBI" id="CHEBI:91130"/>
    </reaction>
    <physiologicalReaction direction="left-to-right" evidence="3">
        <dbReference type="Rhea" id="RHEA:49313"/>
    </physiologicalReaction>
</comment>
<comment type="biophysicochemical properties">
    <kinetics>
        <KM evidence="3">19 uM for xanthoxin</KM>
        <KM evidence="3">10 mM for 3,5,5'-trimethylcyclohexanol</KM>
        <text>no activity with xanthoxic acid, ethanol, isopropanol, butanol, cyclohexanol and 2,6-dimethylcyclohexanol.</text>
    </kinetics>
</comment>
<comment type="interaction">
    <interactant intactId="EBI-4464299">
        <id>Q9C826</id>
    </interactant>
    <interactant intactId="EBI-4464299">
        <id>Q9C826</id>
        <label>ABA2</label>
    </interactant>
    <organismsDiffer>false</organismsDiffer>
    <experiments>6</experiments>
</comment>
<comment type="interaction">
    <interactant intactId="EBI-4464299">
        <id>Q9C826</id>
    </interactant>
    <interactant intactId="EBI-17091580">
        <id>Q8H1R4</id>
        <label>ABCI10</label>
    </interactant>
    <organismsDiffer>false</organismsDiffer>
    <experiments>3</experiments>
</comment>
<comment type="subcellular location">
    <subcellularLocation>
        <location evidence="4">Cytoplasm</location>
    </subcellularLocation>
</comment>
<comment type="tissue specificity">
    <text evidence="3 4">Predominantly in roots and stems, and at lower levels in leaves and seeds.</text>
</comment>
<comment type="induction">
    <text evidence="3 4 5">Constitutively expressed and not up regulated by osmotic stress.</text>
</comment>
<comment type="miscellaneous">
    <text>The biological substrate is probably 2-cis,4-trans-xanthoxin.</text>
</comment>
<comment type="similarity">
    <text evidence="12">Belongs to the short-chain dehydrogenases/reductases (SDR) family.</text>
</comment>
<reference key="1">
    <citation type="journal article" date="2000" name="Nature">
        <title>Sequence and analysis of chromosome 1 of the plant Arabidopsis thaliana.</title>
        <authorList>
            <person name="Theologis A."/>
            <person name="Ecker J.R."/>
            <person name="Palm C.J."/>
            <person name="Federspiel N.A."/>
            <person name="Kaul S."/>
            <person name="White O."/>
            <person name="Alonso J."/>
            <person name="Altafi H."/>
            <person name="Araujo R."/>
            <person name="Bowman C.L."/>
            <person name="Brooks S.Y."/>
            <person name="Buehler E."/>
            <person name="Chan A."/>
            <person name="Chao Q."/>
            <person name="Chen H."/>
            <person name="Cheuk R.F."/>
            <person name="Chin C.W."/>
            <person name="Chung M.K."/>
            <person name="Conn L."/>
            <person name="Conway A.B."/>
            <person name="Conway A.R."/>
            <person name="Creasy T.H."/>
            <person name="Dewar K."/>
            <person name="Dunn P."/>
            <person name="Etgu P."/>
            <person name="Feldblyum T.V."/>
            <person name="Feng J.-D."/>
            <person name="Fong B."/>
            <person name="Fujii C.Y."/>
            <person name="Gill J.E."/>
            <person name="Goldsmith A.D."/>
            <person name="Haas B."/>
            <person name="Hansen N.F."/>
            <person name="Hughes B."/>
            <person name="Huizar L."/>
            <person name="Hunter J.L."/>
            <person name="Jenkins J."/>
            <person name="Johnson-Hopson C."/>
            <person name="Khan S."/>
            <person name="Khaykin E."/>
            <person name="Kim C.J."/>
            <person name="Koo H.L."/>
            <person name="Kremenetskaia I."/>
            <person name="Kurtz D.B."/>
            <person name="Kwan A."/>
            <person name="Lam B."/>
            <person name="Langin-Hooper S."/>
            <person name="Lee A."/>
            <person name="Lee J.M."/>
            <person name="Lenz C.A."/>
            <person name="Li J.H."/>
            <person name="Li Y.-P."/>
            <person name="Lin X."/>
            <person name="Liu S.X."/>
            <person name="Liu Z.A."/>
            <person name="Luros J.S."/>
            <person name="Maiti R."/>
            <person name="Marziali A."/>
            <person name="Militscher J."/>
            <person name="Miranda M."/>
            <person name="Nguyen M."/>
            <person name="Nierman W.C."/>
            <person name="Osborne B.I."/>
            <person name="Pai G."/>
            <person name="Peterson J."/>
            <person name="Pham P.K."/>
            <person name="Rizzo M."/>
            <person name="Rooney T."/>
            <person name="Rowley D."/>
            <person name="Sakano H."/>
            <person name="Salzberg S.L."/>
            <person name="Schwartz J.R."/>
            <person name="Shinn P."/>
            <person name="Southwick A.M."/>
            <person name="Sun H."/>
            <person name="Tallon L.J."/>
            <person name="Tambunga G."/>
            <person name="Toriumi M.J."/>
            <person name="Town C.D."/>
            <person name="Utterback T."/>
            <person name="Van Aken S."/>
            <person name="Vaysberg M."/>
            <person name="Vysotskaia V.S."/>
            <person name="Walker M."/>
            <person name="Wu D."/>
            <person name="Yu G."/>
            <person name="Fraser C.M."/>
            <person name="Venter J.C."/>
            <person name="Davis R.W."/>
        </authorList>
    </citation>
    <scope>NUCLEOTIDE SEQUENCE [LARGE SCALE GENOMIC DNA]</scope>
    <source>
        <strain>cv. Columbia</strain>
    </source>
</reference>
<reference key="2">
    <citation type="journal article" date="2017" name="Plant J.">
        <title>Araport11: a complete reannotation of the Arabidopsis thaliana reference genome.</title>
        <authorList>
            <person name="Cheng C.Y."/>
            <person name="Krishnakumar V."/>
            <person name="Chan A.P."/>
            <person name="Thibaud-Nissen F."/>
            <person name="Schobel S."/>
            <person name="Town C.D."/>
        </authorList>
    </citation>
    <scope>GENOME REANNOTATION</scope>
    <source>
        <strain>cv. Columbia</strain>
    </source>
</reference>
<reference key="3">
    <citation type="journal article" date="2003" name="Science">
        <title>Empirical analysis of transcriptional activity in the Arabidopsis genome.</title>
        <authorList>
            <person name="Yamada K."/>
            <person name="Lim J."/>
            <person name="Dale J.M."/>
            <person name="Chen H."/>
            <person name="Shinn P."/>
            <person name="Palm C.J."/>
            <person name="Southwick A.M."/>
            <person name="Wu H.C."/>
            <person name="Kim C.J."/>
            <person name="Nguyen M."/>
            <person name="Pham P.K."/>
            <person name="Cheuk R.F."/>
            <person name="Karlin-Newmann G."/>
            <person name="Liu S.X."/>
            <person name="Lam B."/>
            <person name="Sakano H."/>
            <person name="Wu T."/>
            <person name="Yu G."/>
            <person name="Miranda M."/>
            <person name="Quach H.L."/>
            <person name="Tripp M."/>
            <person name="Chang C.H."/>
            <person name="Lee J.M."/>
            <person name="Toriumi M.J."/>
            <person name="Chan M.M."/>
            <person name="Tang C.C."/>
            <person name="Onodera C.S."/>
            <person name="Deng J.M."/>
            <person name="Akiyama K."/>
            <person name="Ansari Y."/>
            <person name="Arakawa T."/>
            <person name="Banh J."/>
            <person name="Banno F."/>
            <person name="Bowser L."/>
            <person name="Brooks S.Y."/>
            <person name="Carninci P."/>
            <person name="Chao Q."/>
            <person name="Choy N."/>
            <person name="Enju A."/>
            <person name="Goldsmith A.D."/>
            <person name="Gurjal M."/>
            <person name="Hansen N.F."/>
            <person name="Hayashizaki Y."/>
            <person name="Johnson-Hopson C."/>
            <person name="Hsuan V.W."/>
            <person name="Iida K."/>
            <person name="Karnes M."/>
            <person name="Khan S."/>
            <person name="Koesema E."/>
            <person name="Ishida J."/>
            <person name="Jiang P.X."/>
            <person name="Jones T."/>
            <person name="Kawai J."/>
            <person name="Kamiya A."/>
            <person name="Meyers C."/>
            <person name="Nakajima M."/>
            <person name="Narusaka M."/>
            <person name="Seki M."/>
            <person name="Sakurai T."/>
            <person name="Satou M."/>
            <person name="Tamse R."/>
            <person name="Vaysberg M."/>
            <person name="Wallender E.K."/>
            <person name="Wong C."/>
            <person name="Yamamura Y."/>
            <person name="Yuan S."/>
            <person name="Shinozaki K."/>
            <person name="Davis R.W."/>
            <person name="Theologis A."/>
            <person name="Ecker J.R."/>
        </authorList>
    </citation>
    <scope>NUCLEOTIDE SEQUENCE [LARGE SCALE MRNA]</scope>
    <source>
        <strain>cv. Columbia</strain>
    </source>
</reference>
<reference key="4">
    <citation type="journal article" date="2002" name="Plant Cell">
        <title>A unique short-chain dehydrogenase/reductase in Arabidopsis glucose signaling and abscisic acid biosynthesis and functions.</title>
        <authorList>
            <person name="Cheng W.-H."/>
            <person name="Endo A."/>
            <person name="Zhou L."/>
            <person name="Penney J."/>
            <person name="Chen H.-C."/>
            <person name="Arroyo A."/>
            <person name="Leon P."/>
            <person name="Nambara E."/>
            <person name="Asami T."/>
            <person name="Seo M."/>
            <person name="Koshiba T."/>
            <person name="Sheen J."/>
        </authorList>
    </citation>
    <scope>NUCLEOTIDE SEQUENCE [GENOMIC DNA / MRNA]</scope>
    <scope>MUTAGENESIS OF ALA-45; ARG-145; GLY-162 AND SER-264</scope>
    <scope>TISSUE SPECIFICITY</scope>
    <scope>SUBCELLULAR LOCATION</scope>
    <scope>INDUCTION</scope>
    <scope>FUNCTION</scope>
    <source>
        <strain>cv. Columbia</strain>
    </source>
</reference>
<reference key="5">
    <citation type="journal article" date="1997" name="Plant Physiol.">
        <title>Biochemical characterization of the aba2 and aba3 mutants in Arabidopsis thaliana.</title>
        <authorList>
            <person name="Schwartz S.H."/>
            <person name="Leon-Kloosterziel K.M."/>
            <person name="Koornneef M."/>
            <person name="Zeevaart J.A."/>
        </authorList>
    </citation>
    <scope>FUNCTION</scope>
    <scope>INDUCTION</scope>
</reference>
<reference key="6">
    <citation type="journal article" date="1998" name="Proc. Natl. Acad. Sci. U.S.A.">
        <title>Glucose and ethylene signal transduction crosstalk revealed by an Arabidopsis glucose-insensitive mutant.</title>
        <authorList>
            <person name="Zhou L."/>
            <person name="Jang J.-C."/>
            <person name="Jones T.L."/>
            <person name="Sheen J."/>
        </authorList>
    </citation>
    <scope>IDENTIFICATION</scope>
</reference>
<reference key="7">
    <citation type="journal article" date="2000" name="Plant J.">
        <title>The Arabidopsis sugar-insensitive mutants sis4 and sis5 are defective in abscisic acid synthesis and response.</title>
        <authorList>
            <person name="Laby R.J."/>
            <person name="Kincaid M.S."/>
            <person name="Kim D."/>
            <person name="Gibson S.I."/>
        </authorList>
    </citation>
    <scope>FUNCTION</scope>
</reference>
<reference key="8">
    <citation type="journal article" date="2001" name="Plant J.">
        <title>Impaired sucrose-induction mutants reveal the modulation of sugar-induced starch biosynthetic gene expression by abscisic acid signalling.</title>
        <authorList>
            <person name="Rook F."/>
            <person name="Corke F."/>
            <person name="Card R."/>
            <person name="Munz G."/>
            <person name="Smith C."/>
            <person name="Bevan M.W."/>
        </authorList>
    </citation>
    <scope>IDENTIFICATION</scope>
    <scope>MUTAGENESIS OF ALA-236</scope>
    <source>
        <strain>cv. Columbia</strain>
    </source>
</reference>
<reference key="9">
    <citation type="journal article" date="2002" name="Plant Cell">
        <title>The short-chain alcohol dehydrogenase ABA2 catalyzes the conversion of xanthoxin to abscisic aldehyde.</title>
        <authorList>
            <person name="Gonzalez-Guzman M."/>
            <person name="Apostolova N."/>
            <person name="Belles J.M."/>
            <person name="Barrero J.M."/>
            <person name="Piqueras P."/>
            <person name="Ponce M.R."/>
            <person name="Micol J.L."/>
            <person name="Serrano R."/>
            <person name="Rodriguez P.L."/>
        </authorList>
    </citation>
    <scope>FUNCTION</scope>
    <scope>CATALYTIC ACTIVITY</scope>
    <scope>BIOPHYSICOCHEMICAL PROPERTIES</scope>
    <scope>INDUCTION</scope>
    <scope>TISSUE SPECIFICITY</scope>
    <scope>MUTAGENESIS OF GLY-28; SER-176 AND SER-264</scope>
    <source>
        <strain>cv. Columbia</strain>
    </source>
</reference>
<reference key="10">
    <citation type="journal article" date="2012" name="Mol. Cell. Proteomics">
        <title>Comparative large-scale characterisation of plant vs. mammal proteins reveals similar and idiosyncratic N-alpha acetylation features.</title>
        <authorList>
            <person name="Bienvenut W.V."/>
            <person name="Sumpton D."/>
            <person name="Martinez A."/>
            <person name="Lilla S."/>
            <person name="Espagne C."/>
            <person name="Meinnel T."/>
            <person name="Giglione C."/>
        </authorList>
    </citation>
    <scope>ACETYLATION [LARGE SCALE ANALYSIS] AT SER-2</scope>
    <scope>CLEAVAGE OF INITIATOR METHIONINE [LARGE SCALE ANALYSIS]</scope>
    <scope>IDENTIFICATION BY MASS SPECTROMETRY [LARGE SCALE ANALYSIS]</scope>
</reference>
<feature type="initiator methionine" description="Removed" evidence="15">
    <location>
        <position position="1"/>
    </location>
</feature>
<feature type="chain" id="PRO_0000282347" description="Xanthoxin dehydrogenase">
    <location>
        <begin position="2"/>
        <end position="285"/>
    </location>
</feature>
<feature type="modified residue" description="N-acetylserine" evidence="15">
    <location>
        <position position="2"/>
    </location>
</feature>
<feature type="mutagenesis site" description="In aba2-12/sre1-2; reduced absicic acid synthesis." evidence="3">
    <original>G</original>
    <variation>R</variation>
    <location>
        <position position="28"/>
    </location>
</feature>
<feature type="mutagenesis site" description="In aba2-4/sis4-2; reduced absicic acid synthesis." evidence="4">
    <original>A</original>
    <variation>V</variation>
    <location>
        <position position="45"/>
    </location>
</feature>
<feature type="mutagenesis site" description="In gin1-2; reduced absicic acid synthesis." evidence="4">
    <original>R</original>
    <variation>C</variation>
    <location>
        <position position="145"/>
    </location>
</feature>
<feature type="mutagenesis site" description="In aba2-3/sis4-1; reduced absicic acid synthesis." evidence="4">
    <original>G</original>
    <variation>R</variation>
    <location>
        <position position="162"/>
    </location>
</feature>
<feature type="mutagenesis site" description="In aba2-13/san3-1; reduced absicic acid synthesis." evidence="3">
    <original>S</original>
    <variation>F</variation>
    <location>
        <position position="176"/>
    </location>
</feature>
<feature type="mutagenesis site" description="In isi4; reduced absicic acid synthesis." evidence="2">
    <original>A</original>
    <variation>V</variation>
    <location>
        <position position="236"/>
    </location>
</feature>
<feature type="mutagenesis site" description="In aba2-1; reduced absicic acid synthesis." evidence="3 4">
    <original>S</original>
    <variation>N</variation>
    <location>
        <position position="264"/>
    </location>
</feature>
<evidence type="ECO:0000269" key="1">
    <source>
    </source>
</evidence>
<evidence type="ECO:0000269" key="2">
    <source>
    </source>
</evidence>
<evidence type="ECO:0000269" key="3">
    <source>
    </source>
</evidence>
<evidence type="ECO:0000269" key="4">
    <source>
    </source>
</evidence>
<evidence type="ECO:0000269" key="5">
    <source>
    </source>
</evidence>
<evidence type="ECO:0000303" key="6">
    <source>
    </source>
</evidence>
<evidence type="ECO:0000303" key="7">
    <source>
    </source>
</evidence>
<evidence type="ECO:0000303" key="8">
    <source>
    </source>
</evidence>
<evidence type="ECO:0000303" key="9">
    <source>
    </source>
</evidence>
<evidence type="ECO:0000303" key="10">
    <source>
    </source>
</evidence>
<evidence type="ECO:0000303" key="11">
    <source>
    </source>
</evidence>
<evidence type="ECO:0000305" key="12"/>
<evidence type="ECO:0000312" key="13">
    <source>
        <dbReference type="Araport" id="AT1G52340"/>
    </source>
</evidence>
<evidence type="ECO:0000312" key="14">
    <source>
        <dbReference type="EMBL" id="AAG51536.1"/>
    </source>
</evidence>
<evidence type="ECO:0007744" key="15">
    <source>
    </source>
</evidence>
<gene>
    <name evidence="10" type="primary">ABA2</name>
    <name evidence="11" type="synonym">GIN1</name>
    <name evidence="7" type="synonym">ISI4</name>
    <name evidence="8" type="synonym">SAN3</name>
    <name evidence="9" type="synonym">SDR1</name>
    <name evidence="6" type="synonym">SIS4</name>
    <name evidence="8" type="synonym">SRE1</name>
    <name evidence="13" type="ordered locus">At1g52340</name>
    <name evidence="14" type="ORF">F19K6.3</name>
</gene>
<name>ABA2_ARATH</name>
<sequence>MSTNTESSSYSSLPSQRLLGKVALITGGATGIGESIVRLFHKHGAKVCIVDLQDDLGGEVCKSLLRGESKETAFFIHGDVRVEDDISNAVDFAVKNFGTLDILINNAGLCGAPCPDIRNYSLSEFEMTFDVNVKGAFLSMKHAARVMIPEKKGSIVSLCSVGGVVGGVGPHSYVGSKHAVLGLTRSVAAELGQHGIRVNCVSPYAVATKLALAHLPEEERTEDAFVGFRNFAAANANLKGVELTVDDVANAVLFLASDDSRYISGDNLMIDGGFTCTNHSFKVFR</sequence>